<dbReference type="EC" id="2.1.1.173" evidence="1"/>
<dbReference type="EC" id="2.1.1.264" evidence="1"/>
<dbReference type="EMBL" id="CP000851">
    <property type="protein sequence ID" value="ABV87268.1"/>
    <property type="molecule type" value="Genomic_DNA"/>
</dbReference>
<dbReference type="RefSeq" id="WP_012155186.1">
    <property type="nucleotide sequence ID" value="NC_009901.1"/>
</dbReference>
<dbReference type="SMR" id="A8H3Y1"/>
<dbReference type="STRING" id="398579.Spea_1946"/>
<dbReference type="KEGG" id="spl:Spea_1946"/>
<dbReference type="eggNOG" id="COG0116">
    <property type="taxonomic scope" value="Bacteria"/>
</dbReference>
<dbReference type="eggNOG" id="COG1092">
    <property type="taxonomic scope" value="Bacteria"/>
</dbReference>
<dbReference type="HOGENOM" id="CLU_014042_2_0_6"/>
<dbReference type="OrthoDB" id="9809404at2"/>
<dbReference type="Proteomes" id="UP000002608">
    <property type="component" value="Chromosome"/>
</dbReference>
<dbReference type="GO" id="GO:0005737">
    <property type="term" value="C:cytoplasm"/>
    <property type="evidence" value="ECO:0007669"/>
    <property type="project" value="UniProtKB-SubCell"/>
</dbReference>
<dbReference type="GO" id="GO:0052915">
    <property type="term" value="F:23S rRNA (guanine(2445)-N(2))-methyltransferase activity"/>
    <property type="evidence" value="ECO:0007669"/>
    <property type="project" value="UniProtKB-UniRule"/>
</dbReference>
<dbReference type="GO" id="GO:0003723">
    <property type="term" value="F:RNA binding"/>
    <property type="evidence" value="ECO:0007669"/>
    <property type="project" value="UniProtKB-KW"/>
</dbReference>
<dbReference type="GO" id="GO:0070043">
    <property type="term" value="F:rRNA (guanine-N7-)-methyltransferase activity"/>
    <property type="evidence" value="ECO:0007669"/>
    <property type="project" value="UniProtKB-UniRule"/>
</dbReference>
<dbReference type="CDD" id="cd02440">
    <property type="entry name" value="AdoMet_MTases"/>
    <property type="match status" value="1"/>
</dbReference>
<dbReference type="CDD" id="cd11715">
    <property type="entry name" value="THUMP_AdoMetMT"/>
    <property type="match status" value="1"/>
</dbReference>
<dbReference type="FunFam" id="3.40.50.150:FF:000039">
    <property type="entry name" value="Ribosomal RNA large subunit methyltransferase K/L"/>
    <property type="match status" value="1"/>
</dbReference>
<dbReference type="Gene3D" id="3.30.2130.30">
    <property type="match status" value="1"/>
</dbReference>
<dbReference type="Gene3D" id="3.30.750.80">
    <property type="entry name" value="RNA methyltransferase domain (HRMD) like"/>
    <property type="match status" value="1"/>
</dbReference>
<dbReference type="Gene3D" id="3.40.50.150">
    <property type="entry name" value="Vaccinia Virus protein VP39"/>
    <property type="match status" value="2"/>
</dbReference>
<dbReference type="HAMAP" id="MF_01858">
    <property type="entry name" value="23SrRNA_methyltr_KL"/>
    <property type="match status" value="1"/>
</dbReference>
<dbReference type="InterPro" id="IPR017244">
    <property type="entry name" value="23SrRNA_methyltr_KL"/>
</dbReference>
<dbReference type="InterPro" id="IPR002052">
    <property type="entry name" value="DNA_methylase_N6_adenine_CS"/>
</dbReference>
<dbReference type="InterPro" id="IPR000241">
    <property type="entry name" value="RlmKL-like_Mtase"/>
</dbReference>
<dbReference type="InterPro" id="IPR053943">
    <property type="entry name" value="RlmKL-like_Mtase_CS"/>
</dbReference>
<dbReference type="InterPro" id="IPR054170">
    <property type="entry name" value="RlmL_1st"/>
</dbReference>
<dbReference type="InterPro" id="IPR019614">
    <property type="entry name" value="SAM-dep_methyl-trfase"/>
</dbReference>
<dbReference type="InterPro" id="IPR029063">
    <property type="entry name" value="SAM-dependent_MTases_sf"/>
</dbReference>
<dbReference type="InterPro" id="IPR004114">
    <property type="entry name" value="THUMP_dom"/>
</dbReference>
<dbReference type="NCBIfam" id="NF008748">
    <property type="entry name" value="PRK11783.1"/>
    <property type="match status" value="1"/>
</dbReference>
<dbReference type="PANTHER" id="PTHR47313">
    <property type="entry name" value="RIBOSOMAL RNA LARGE SUBUNIT METHYLTRANSFERASE K/L"/>
    <property type="match status" value="1"/>
</dbReference>
<dbReference type="PANTHER" id="PTHR47313:SF1">
    <property type="entry name" value="RIBOSOMAL RNA LARGE SUBUNIT METHYLTRANSFERASE K_L"/>
    <property type="match status" value="1"/>
</dbReference>
<dbReference type="Pfam" id="PF10672">
    <property type="entry name" value="Methyltrans_SAM"/>
    <property type="match status" value="1"/>
</dbReference>
<dbReference type="Pfam" id="PF22020">
    <property type="entry name" value="RlmL_1st"/>
    <property type="match status" value="1"/>
</dbReference>
<dbReference type="Pfam" id="PF02926">
    <property type="entry name" value="THUMP"/>
    <property type="match status" value="1"/>
</dbReference>
<dbReference type="Pfam" id="PF01170">
    <property type="entry name" value="UPF0020"/>
    <property type="match status" value="1"/>
</dbReference>
<dbReference type="PIRSF" id="PIRSF037618">
    <property type="entry name" value="RNA_Mtase_bacteria_prd"/>
    <property type="match status" value="1"/>
</dbReference>
<dbReference type="SMART" id="SM00981">
    <property type="entry name" value="THUMP"/>
    <property type="match status" value="1"/>
</dbReference>
<dbReference type="SUPFAM" id="SSF53335">
    <property type="entry name" value="S-adenosyl-L-methionine-dependent methyltransferases"/>
    <property type="match status" value="2"/>
</dbReference>
<dbReference type="PROSITE" id="PS51165">
    <property type="entry name" value="THUMP"/>
    <property type="match status" value="1"/>
</dbReference>
<dbReference type="PROSITE" id="PS01261">
    <property type="entry name" value="UPF0020"/>
    <property type="match status" value="1"/>
</dbReference>
<proteinExistence type="inferred from homology"/>
<keyword id="KW-0963">Cytoplasm</keyword>
<keyword id="KW-0489">Methyltransferase</keyword>
<keyword id="KW-1185">Reference proteome</keyword>
<keyword id="KW-0694">RNA-binding</keyword>
<keyword id="KW-0698">rRNA processing</keyword>
<keyword id="KW-0949">S-adenosyl-L-methionine</keyword>
<keyword id="KW-0808">Transferase</keyword>
<organism>
    <name type="scientific">Shewanella pealeana (strain ATCC 700345 / ANG-SQ1)</name>
    <dbReference type="NCBI Taxonomy" id="398579"/>
    <lineage>
        <taxon>Bacteria</taxon>
        <taxon>Pseudomonadati</taxon>
        <taxon>Pseudomonadota</taxon>
        <taxon>Gammaproteobacteria</taxon>
        <taxon>Alteromonadales</taxon>
        <taxon>Shewanellaceae</taxon>
        <taxon>Shewanella</taxon>
    </lineage>
</organism>
<reference key="1">
    <citation type="submission" date="2007-10" db="EMBL/GenBank/DDBJ databases">
        <title>Complete sequence of Shewanella pealeana ATCC 700345.</title>
        <authorList>
            <consortium name="US DOE Joint Genome Institute"/>
            <person name="Copeland A."/>
            <person name="Lucas S."/>
            <person name="Lapidus A."/>
            <person name="Barry K."/>
            <person name="Glavina del Rio T."/>
            <person name="Dalin E."/>
            <person name="Tice H."/>
            <person name="Pitluck S."/>
            <person name="Chertkov O."/>
            <person name="Brettin T."/>
            <person name="Bruce D."/>
            <person name="Detter J.C."/>
            <person name="Han C."/>
            <person name="Schmutz J."/>
            <person name="Larimer F."/>
            <person name="Land M."/>
            <person name="Hauser L."/>
            <person name="Kyrpides N."/>
            <person name="Kim E."/>
            <person name="Zhao J.-S.Z."/>
            <person name="Manno D."/>
            <person name="Hawari J."/>
            <person name="Richardson P."/>
        </authorList>
    </citation>
    <scope>NUCLEOTIDE SEQUENCE [LARGE SCALE GENOMIC DNA]</scope>
    <source>
        <strain>ATCC 700345 / ANG-SQ1</strain>
    </source>
</reference>
<sequence>MLNFFAAAPRGYEYALSLELAELGASEIKESVAGVYFSAPLELGYRITLWSRLASRIIFVIYKGPCESPEQLYNAAYGIDWQMQFSNRSTFSIDFHGLGGFIKNTQFGALKIKDAIVDRFRDDDFSRPNVERVDADFRIDAHFRRGEITIGINFSGPALHKRGYRSTTGEAPLKENLAANMLVRSGWQADKVDLLDPFCGSGTILIEAAMMACDIAPGIHRERFGFDHWLPHNKKVWQELLNEAQARASIGKTRCEIKFFGSDIDSRLVALAKRNAENAGVLELIDFSVGNALTIDVPVESGFLISNPPYGERLGNVTSLLQLYYQLGDKFKAEFGGWSIAILNSDIELLSALKLKADKQMKMNNGALECAFNLYTVHAENTRRVDPANIKIEGDVSDIAVPFANRIKKNFKQLEKWAKKEGIDSYRLYDADLPEYNVAVDKYLDYVVIQEYSAPSQIPEAVTKRRLTDVLISLPSAIGIDPNHIILKTRERKKGTNQYEKLVANKLELITTEYGAKFKLNLKEYLDTGLFLDHRLTRKLVGEKSKGRSVCNLFSYTGSASVHAALGGATSVTTVDMSNTYIDWAKENFALNGLNSDKYQFVQANCLQWMKRTHDRFDLIFIDPPTFSNSKRMEDSFDVERDHVAMLSDVFKLLNPGGEIIFSNNKRKFKMEIAALEAQGMSIKNIDNQTLPLDFKRNPHIHNTWLITHAG</sequence>
<feature type="chain" id="PRO_0000366828" description="Ribosomal RNA large subunit methyltransferase K/L">
    <location>
        <begin position="1"/>
        <end position="711"/>
    </location>
</feature>
<feature type="domain" description="THUMP" evidence="1">
    <location>
        <begin position="43"/>
        <end position="154"/>
    </location>
</feature>
<evidence type="ECO:0000255" key="1">
    <source>
        <dbReference type="HAMAP-Rule" id="MF_01858"/>
    </source>
</evidence>
<protein>
    <recommendedName>
        <fullName evidence="1">Ribosomal RNA large subunit methyltransferase K/L</fullName>
    </recommendedName>
    <domain>
        <recommendedName>
            <fullName evidence="1">23S rRNA m2G2445 methyltransferase</fullName>
            <ecNumber evidence="1">2.1.1.173</ecNumber>
        </recommendedName>
        <alternativeName>
            <fullName evidence="1">rRNA (guanine-N(2)-)-methyltransferase RlmL</fullName>
        </alternativeName>
    </domain>
    <domain>
        <recommendedName>
            <fullName evidence="1">23S rRNA m7G2069 methyltransferase</fullName>
            <ecNumber evidence="1">2.1.1.264</ecNumber>
        </recommendedName>
        <alternativeName>
            <fullName evidence="1">rRNA (guanine-N(7)-)-methyltransferase RlmK</fullName>
        </alternativeName>
    </domain>
</protein>
<gene>
    <name evidence="1" type="primary">rlmL</name>
    <name type="ordered locus">Spea_1946</name>
</gene>
<comment type="function">
    <text evidence="1">Specifically methylates the guanine in position 2445 (m2G2445) and the guanine in position 2069 (m7G2069) of 23S rRNA.</text>
</comment>
<comment type="catalytic activity">
    <reaction evidence="1">
        <text>guanosine(2445) in 23S rRNA + S-adenosyl-L-methionine = N(2)-methylguanosine(2445) in 23S rRNA + S-adenosyl-L-homocysteine + H(+)</text>
        <dbReference type="Rhea" id="RHEA:42740"/>
        <dbReference type="Rhea" id="RHEA-COMP:10215"/>
        <dbReference type="Rhea" id="RHEA-COMP:10216"/>
        <dbReference type="ChEBI" id="CHEBI:15378"/>
        <dbReference type="ChEBI" id="CHEBI:57856"/>
        <dbReference type="ChEBI" id="CHEBI:59789"/>
        <dbReference type="ChEBI" id="CHEBI:74269"/>
        <dbReference type="ChEBI" id="CHEBI:74481"/>
        <dbReference type="EC" id="2.1.1.173"/>
    </reaction>
</comment>
<comment type="catalytic activity">
    <reaction evidence="1">
        <text>guanosine(2069) in 23S rRNA + S-adenosyl-L-methionine = N(2)-methylguanosine(2069) in 23S rRNA + S-adenosyl-L-homocysteine + H(+)</text>
        <dbReference type="Rhea" id="RHEA:43772"/>
        <dbReference type="Rhea" id="RHEA-COMP:10688"/>
        <dbReference type="Rhea" id="RHEA-COMP:10689"/>
        <dbReference type="ChEBI" id="CHEBI:15378"/>
        <dbReference type="ChEBI" id="CHEBI:57856"/>
        <dbReference type="ChEBI" id="CHEBI:59789"/>
        <dbReference type="ChEBI" id="CHEBI:74269"/>
        <dbReference type="ChEBI" id="CHEBI:74481"/>
        <dbReference type="EC" id="2.1.1.264"/>
    </reaction>
</comment>
<comment type="subcellular location">
    <subcellularLocation>
        <location evidence="1">Cytoplasm</location>
    </subcellularLocation>
</comment>
<comment type="similarity">
    <text evidence="1">Belongs to the methyltransferase superfamily. RlmKL family.</text>
</comment>
<name>RLMKL_SHEPA</name>
<accession>A8H3Y1</accession>